<keyword id="KW-1185">Reference proteome</keyword>
<keyword id="KW-0687">Ribonucleoprotein</keyword>
<keyword id="KW-0689">Ribosomal protein</keyword>
<keyword id="KW-0694">RNA-binding</keyword>
<keyword id="KW-0699">rRNA-binding</keyword>
<proteinExistence type="inferred from homology"/>
<organism>
    <name type="scientific">Azoarcus sp. (strain BH72)</name>
    <dbReference type="NCBI Taxonomy" id="418699"/>
    <lineage>
        <taxon>Bacteria</taxon>
        <taxon>Pseudomonadati</taxon>
        <taxon>Pseudomonadota</taxon>
        <taxon>Betaproteobacteria</taxon>
        <taxon>Rhodocyclales</taxon>
        <taxon>Zoogloeaceae</taxon>
        <taxon>Azoarcus</taxon>
    </lineage>
</organism>
<sequence>MALDTSTKAQIVSDFQRAQGDTGSPEVQVALLTARINGLTGHFKANAKDHHSRRGLLKMVSQRRKLLDYLKGRNVDSYRALIERLGLRK</sequence>
<name>RS15_AZOSB</name>
<gene>
    <name evidence="1" type="primary">rpsO</name>
    <name type="ordered locus">azo2104</name>
</gene>
<feature type="chain" id="PRO_1000054748" description="Small ribosomal subunit protein uS15">
    <location>
        <begin position="1"/>
        <end position="89"/>
    </location>
</feature>
<dbReference type="EMBL" id="AM406670">
    <property type="protein sequence ID" value="CAL94721.1"/>
    <property type="molecule type" value="Genomic_DNA"/>
</dbReference>
<dbReference type="RefSeq" id="WP_011765835.1">
    <property type="nucleotide sequence ID" value="NC_008702.1"/>
</dbReference>
<dbReference type="SMR" id="A1K7B6"/>
<dbReference type="STRING" id="62928.azo2104"/>
<dbReference type="KEGG" id="aoa:dqs_2236"/>
<dbReference type="KEGG" id="azo:azo2104"/>
<dbReference type="eggNOG" id="COG0184">
    <property type="taxonomic scope" value="Bacteria"/>
</dbReference>
<dbReference type="HOGENOM" id="CLU_148518_0_0_4"/>
<dbReference type="OrthoDB" id="9799262at2"/>
<dbReference type="Proteomes" id="UP000002588">
    <property type="component" value="Chromosome"/>
</dbReference>
<dbReference type="GO" id="GO:0022627">
    <property type="term" value="C:cytosolic small ribosomal subunit"/>
    <property type="evidence" value="ECO:0007669"/>
    <property type="project" value="TreeGrafter"/>
</dbReference>
<dbReference type="GO" id="GO:0019843">
    <property type="term" value="F:rRNA binding"/>
    <property type="evidence" value="ECO:0007669"/>
    <property type="project" value="UniProtKB-UniRule"/>
</dbReference>
<dbReference type="GO" id="GO:0003735">
    <property type="term" value="F:structural constituent of ribosome"/>
    <property type="evidence" value="ECO:0007669"/>
    <property type="project" value="InterPro"/>
</dbReference>
<dbReference type="GO" id="GO:0006412">
    <property type="term" value="P:translation"/>
    <property type="evidence" value="ECO:0007669"/>
    <property type="project" value="UniProtKB-UniRule"/>
</dbReference>
<dbReference type="CDD" id="cd00353">
    <property type="entry name" value="Ribosomal_S15p_S13e"/>
    <property type="match status" value="1"/>
</dbReference>
<dbReference type="FunFam" id="1.10.287.10:FF:000002">
    <property type="entry name" value="30S ribosomal protein S15"/>
    <property type="match status" value="1"/>
</dbReference>
<dbReference type="Gene3D" id="6.10.250.3130">
    <property type="match status" value="1"/>
</dbReference>
<dbReference type="Gene3D" id="1.10.287.10">
    <property type="entry name" value="S15/NS1, RNA-binding"/>
    <property type="match status" value="1"/>
</dbReference>
<dbReference type="HAMAP" id="MF_01343_B">
    <property type="entry name" value="Ribosomal_uS15_B"/>
    <property type="match status" value="1"/>
</dbReference>
<dbReference type="InterPro" id="IPR000589">
    <property type="entry name" value="Ribosomal_uS15"/>
</dbReference>
<dbReference type="InterPro" id="IPR005290">
    <property type="entry name" value="Ribosomal_uS15_bac-type"/>
</dbReference>
<dbReference type="InterPro" id="IPR009068">
    <property type="entry name" value="uS15_NS1_RNA-bd_sf"/>
</dbReference>
<dbReference type="NCBIfam" id="TIGR00952">
    <property type="entry name" value="S15_bact"/>
    <property type="match status" value="1"/>
</dbReference>
<dbReference type="PANTHER" id="PTHR23321">
    <property type="entry name" value="RIBOSOMAL PROTEIN S15, BACTERIAL AND ORGANELLAR"/>
    <property type="match status" value="1"/>
</dbReference>
<dbReference type="PANTHER" id="PTHR23321:SF26">
    <property type="entry name" value="SMALL RIBOSOMAL SUBUNIT PROTEIN US15M"/>
    <property type="match status" value="1"/>
</dbReference>
<dbReference type="Pfam" id="PF00312">
    <property type="entry name" value="Ribosomal_S15"/>
    <property type="match status" value="1"/>
</dbReference>
<dbReference type="SMART" id="SM01387">
    <property type="entry name" value="Ribosomal_S15"/>
    <property type="match status" value="1"/>
</dbReference>
<dbReference type="SUPFAM" id="SSF47060">
    <property type="entry name" value="S15/NS1 RNA-binding domain"/>
    <property type="match status" value="1"/>
</dbReference>
<dbReference type="PROSITE" id="PS00362">
    <property type="entry name" value="RIBOSOMAL_S15"/>
    <property type="match status" value="1"/>
</dbReference>
<reference key="1">
    <citation type="journal article" date="2006" name="Nat. Biotechnol.">
        <title>Complete genome of the mutualistic, N2-fixing grass endophyte Azoarcus sp. strain BH72.</title>
        <authorList>
            <person name="Krause A."/>
            <person name="Ramakumar A."/>
            <person name="Bartels D."/>
            <person name="Battistoni F."/>
            <person name="Bekel T."/>
            <person name="Boch J."/>
            <person name="Boehm M."/>
            <person name="Friedrich F."/>
            <person name="Hurek T."/>
            <person name="Krause L."/>
            <person name="Linke B."/>
            <person name="McHardy A.C."/>
            <person name="Sarkar A."/>
            <person name="Schneiker S."/>
            <person name="Syed A.A."/>
            <person name="Thauer R."/>
            <person name="Vorhoelter F.-J."/>
            <person name="Weidner S."/>
            <person name="Puehler A."/>
            <person name="Reinhold-Hurek B."/>
            <person name="Kaiser O."/>
            <person name="Goesmann A."/>
        </authorList>
    </citation>
    <scope>NUCLEOTIDE SEQUENCE [LARGE SCALE GENOMIC DNA]</scope>
    <source>
        <strain>BH72</strain>
    </source>
</reference>
<accession>A1K7B6</accession>
<protein>
    <recommendedName>
        <fullName evidence="1">Small ribosomal subunit protein uS15</fullName>
    </recommendedName>
    <alternativeName>
        <fullName evidence="2">30S ribosomal protein S15</fullName>
    </alternativeName>
</protein>
<evidence type="ECO:0000255" key="1">
    <source>
        <dbReference type="HAMAP-Rule" id="MF_01343"/>
    </source>
</evidence>
<evidence type="ECO:0000305" key="2"/>
<comment type="function">
    <text evidence="1">One of the primary rRNA binding proteins, it binds directly to 16S rRNA where it helps nucleate assembly of the platform of the 30S subunit by binding and bridging several RNA helices of the 16S rRNA.</text>
</comment>
<comment type="function">
    <text evidence="1">Forms an intersubunit bridge (bridge B4) with the 23S rRNA of the 50S subunit in the ribosome.</text>
</comment>
<comment type="subunit">
    <text evidence="1">Part of the 30S ribosomal subunit. Forms a bridge to the 50S subunit in the 70S ribosome, contacting the 23S rRNA.</text>
</comment>
<comment type="similarity">
    <text evidence="1">Belongs to the universal ribosomal protein uS15 family.</text>
</comment>